<name>YABA_PEDPA</name>
<gene>
    <name evidence="1" type="primary">yabA</name>
    <name type="ordered locus">PEPE_1478</name>
</gene>
<sequence>MDKKDLFDQITEVTRNTEDLLNKLHETQSAMVEIMEENAELQIENQHLRERLKQATAAENEGTKNTKYGLSKSLQNLEKLYASGYHVCNEFYGKHRQDEEECAFCLTVIYGDR</sequence>
<protein>
    <recommendedName>
        <fullName evidence="1">Replication initiation control protein YabA</fullName>
    </recommendedName>
</protein>
<dbReference type="EMBL" id="CP000422">
    <property type="protein sequence ID" value="ABJ68509.1"/>
    <property type="molecule type" value="Genomic_DNA"/>
</dbReference>
<dbReference type="RefSeq" id="WP_002833274.1">
    <property type="nucleotide sequence ID" value="NC_008525.1"/>
</dbReference>
<dbReference type="SMR" id="Q03E63"/>
<dbReference type="STRING" id="278197.PEPE_1478"/>
<dbReference type="DNASU" id="4417329"/>
<dbReference type="GeneID" id="33061285"/>
<dbReference type="KEGG" id="ppe:PEPE_1478"/>
<dbReference type="eggNOG" id="COG4467">
    <property type="taxonomic scope" value="Bacteria"/>
</dbReference>
<dbReference type="HOGENOM" id="CLU_157169_0_1_9"/>
<dbReference type="OrthoDB" id="2112130at2"/>
<dbReference type="Proteomes" id="UP000000773">
    <property type="component" value="Chromosome"/>
</dbReference>
<dbReference type="GO" id="GO:0009295">
    <property type="term" value="C:nucleoid"/>
    <property type="evidence" value="ECO:0007669"/>
    <property type="project" value="UniProtKB-SubCell"/>
</dbReference>
<dbReference type="GO" id="GO:0006260">
    <property type="term" value="P:DNA replication"/>
    <property type="evidence" value="ECO:0007669"/>
    <property type="project" value="UniProtKB-UniRule"/>
</dbReference>
<dbReference type="HAMAP" id="MF_01159">
    <property type="entry name" value="YabA"/>
    <property type="match status" value="1"/>
</dbReference>
<dbReference type="InterPro" id="IPR010377">
    <property type="entry name" value="YabA"/>
</dbReference>
<dbReference type="Pfam" id="PF06156">
    <property type="entry name" value="YabA"/>
    <property type="match status" value="1"/>
</dbReference>
<dbReference type="PIRSF" id="PIRSF021439">
    <property type="entry name" value="DUF972"/>
    <property type="match status" value="1"/>
</dbReference>
<proteinExistence type="inferred from homology"/>
<organism>
    <name type="scientific">Pediococcus pentosaceus (strain ATCC 25745 / CCUG 21536 / LMG 10740 / 183-1w)</name>
    <dbReference type="NCBI Taxonomy" id="278197"/>
    <lineage>
        <taxon>Bacteria</taxon>
        <taxon>Bacillati</taxon>
        <taxon>Bacillota</taxon>
        <taxon>Bacilli</taxon>
        <taxon>Lactobacillales</taxon>
        <taxon>Lactobacillaceae</taxon>
        <taxon>Pediococcus</taxon>
    </lineage>
</organism>
<reference key="1">
    <citation type="journal article" date="2006" name="Proc. Natl. Acad. Sci. U.S.A.">
        <title>Comparative genomics of the lactic acid bacteria.</title>
        <authorList>
            <person name="Makarova K.S."/>
            <person name="Slesarev A."/>
            <person name="Wolf Y.I."/>
            <person name="Sorokin A."/>
            <person name="Mirkin B."/>
            <person name="Koonin E.V."/>
            <person name="Pavlov A."/>
            <person name="Pavlova N."/>
            <person name="Karamychev V."/>
            <person name="Polouchine N."/>
            <person name="Shakhova V."/>
            <person name="Grigoriev I."/>
            <person name="Lou Y."/>
            <person name="Rohksar D."/>
            <person name="Lucas S."/>
            <person name="Huang K."/>
            <person name="Goodstein D.M."/>
            <person name="Hawkins T."/>
            <person name="Plengvidhya V."/>
            <person name="Welker D."/>
            <person name="Hughes J."/>
            <person name="Goh Y."/>
            <person name="Benson A."/>
            <person name="Baldwin K."/>
            <person name="Lee J.-H."/>
            <person name="Diaz-Muniz I."/>
            <person name="Dosti B."/>
            <person name="Smeianov V."/>
            <person name="Wechter W."/>
            <person name="Barabote R."/>
            <person name="Lorca G."/>
            <person name="Altermann E."/>
            <person name="Barrangou R."/>
            <person name="Ganesan B."/>
            <person name="Xie Y."/>
            <person name="Rawsthorne H."/>
            <person name="Tamir D."/>
            <person name="Parker C."/>
            <person name="Breidt F."/>
            <person name="Broadbent J.R."/>
            <person name="Hutkins R."/>
            <person name="O'Sullivan D."/>
            <person name="Steele J."/>
            <person name="Unlu G."/>
            <person name="Saier M.H. Jr."/>
            <person name="Klaenhammer T."/>
            <person name="Richardson P."/>
            <person name="Kozyavkin S."/>
            <person name="Weimer B.C."/>
            <person name="Mills D.A."/>
        </authorList>
    </citation>
    <scope>NUCLEOTIDE SEQUENCE [LARGE SCALE GENOMIC DNA]</scope>
    <source>
        <strain>ATCC 25745 / CCUG 21536 / LMG 10740 / 183-1w</strain>
    </source>
</reference>
<keyword id="KW-0963">Cytoplasm</keyword>
<keyword id="KW-0235">DNA replication</keyword>
<keyword id="KW-0236">DNA replication inhibitor</keyword>
<keyword id="KW-0479">Metal-binding</keyword>
<keyword id="KW-0862">Zinc</keyword>
<feature type="chain" id="PRO_1000065583" description="Replication initiation control protein YabA">
    <location>
        <begin position="1"/>
        <end position="113"/>
    </location>
</feature>
<feature type="binding site" evidence="1">
    <location>
        <position position="86"/>
    </location>
    <ligand>
        <name>Zn(2+)</name>
        <dbReference type="ChEBI" id="CHEBI:29105"/>
    </ligand>
</feature>
<feature type="binding site" evidence="1">
    <location>
        <position position="88"/>
    </location>
    <ligand>
        <name>Zn(2+)</name>
        <dbReference type="ChEBI" id="CHEBI:29105"/>
    </ligand>
</feature>
<feature type="binding site" evidence="1">
    <location>
        <position position="102"/>
    </location>
    <ligand>
        <name>Zn(2+)</name>
        <dbReference type="ChEBI" id="CHEBI:29105"/>
    </ligand>
</feature>
<feature type="binding site" evidence="1">
    <location>
        <position position="105"/>
    </location>
    <ligand>
        <name>Zn(2+)</name>
        <dbReference type="ChEBI" id="CHEBI:29105"/>
    </ligand>
</feature>
<evidence type="ECO:0000255" key="1">
    <source>
        <dbReference type="HAMAP-Rule" id="MF_01159"/>
    </source>
</evidence>
<accession>Q03E63</accession>
<comment type="function">
    <text evidence="1">Involved in control of chromosome replication initiation. Inhibits the cooperative binding of DnaA to the oriC region, thus negatively regulating initiation of chromosome replication. Inhibits the ability of DnaA-ATP to form a helix on DNA; does not disassemble preformed DnaA-DNA helices. Decreases the residence time of DnaA on the chromosome at its binding sites (oriC, replication forks and promoter-binding sites). Tethers DnaA to the replication machinery via the DNA polymerase beta sliding clamp subunit (dnaN). Associates with oriC and other DnaA targets on the chromosome in a DnaA-dependent manner.</text>
</comment>
<comment type="cofactor">
    <cofactor evidence="1">
        <name>Zn(2+)</name>
        <dbReference type="ChEBI" id="CHEBI:29105"/>
    </cofactor>
    <text evidence="1">Binds 1 zinc ion per subunit.</text>
</comment>
<comment type="subunit">
    <text evidence="1">Homotetramer. Interacts with both DnaA and DnaN, acting as a bridge between these two proteins.</text>
</comment>
<comment type="subcellular location">
    <subcellularLocation>
        <location evidence="1">Cytoplasm</location>
        <location evidence="1">Nucleoid</location>
    </subcellularLocation>
    <text evidence="1">Localizes in tight foci, which correspond to the replisome at mid-cell throughout the cell cycle.</text>
</comment>
<comment type="similarity">
    <text evidence="1">Belongs to the YabA family.</text>
</comment>